<accession>A2SFM9</accession>
<proteinExistence type="inferred from homology"/>
<sequence>MAEIKNYTLNFGPQHPAAHGVLRLILELDGEVIQRADPHIGLLHRATEKLAESKTYIQSLPYMDRLDYVSMMCNEHAYCLAIEKLLGVDVPVRAQYIRVMFSEITRILNHLLWIGAHGLDCGAMNILIYAFREREDLFDMYEAVSGARMHAAYFRPGGVYRDLPDTMPQYRVSKIRNAKALAKMNENRQGSLLDFIEDFCRRFPKNVDDYETLLTDNRIWKQRTVGIGVVTPERALNLGFTGPMLRGSGIAWDLRKTQPYDVYDRVDFDIPVGAGGDCYDRYLVRVEELRQSNRIIQQCAAWLRANPGPVITDNHKVAAPGRVDMKSNMEELIHHFKLFTEGFHVPEGEAYAAVEHPKGEFGIYLVSDGANKPYRLKIRAPGFAHLAAMDEMSRGHMIADAVAVIGTMDIVFGEIDR</sequence>
<keyword id="KW-0997">Cell inner membrane</keyword>
<keyword id="KW-1003">Cell membrane</keyword>
<keyword id="KW-0472">Membrane</keyword>
<keyword id="KW-0520">NAD</keyword>
<keyword id="KW-0874">Quinone</keyword>
<keyword id="KW-1185">Reference proteome</keyword>
<keyword id="KW-1278">Translocase</keyword>
<keyword id="KW-0813">Transport</keyword>
<keyword id="KW-0830">Ubiquinone</keyword>
<organism>
    <name type="scientific">Methylibium petroleiphilum (strain ATCC BAA-1232 / LMG 22953 / PM1)</name>
    <dbReference type="NCBI Taxonomy" id="420662"/>
    <lineage>
        <taxon>Bacteria</taxon>
        <taxon>Pseudomonadati</taxon>
        <taxon>Pseudomonadota</taxon>
        <taxon>Betaproteobacteria</taxon>
        <taxon>Burkholderiales</taxon>
        <taxon>Sphaerotilaceae</taxon>
        <taxon>Methylibium</taxon>
    </lineage>
</organism>
<gene>
    <name evidence="1" type="primary">nuoD</name>
    <name type="ordered locus">Mpe_A1406</name>
</gene>
<comment type="function">
    <text evidence="1">NDH-1 shuttles electrons from NADH, via FMN and iron-sulfur (Fe-S) centers, to quinones in the respiratory chain. The immediate electron acceptor for the enzyme in this species is believed to be ubiquinone. Couples the redox reaction to proton translocation (for every two electrons transferred, four hydrogen ions are translocated across the cytoplasmic membrane), and thus conserves the redox energy in a proton gradient.</text>
</comment>
<comment type="catalytic activity">
    <reaction evidence="1">
        <text>a quinone + NADH + 5 H(+)(in) = a quinol + NAD(+) + 4 H(+)(out)</text>
        <dbReference type="Rhea" id="RHEA:57888"/>
        <dbReference type="ChEBI" id="CHEBI:15378"/>
        <dbReference type="ChEBI" id="CHEBI:24646"/>
        <dbReference type="ChEBI" id="CHEBI:57540"/>
        <dbReference type="ChEBI" id="CHEBI:57945"/>
        <dbReference type="ChEBI" id="CHEBI:132124"/>
    </reaction>
</comment>
<comment type="subunit">
    <text evidence="1">NDH-1 is composed of 14 different subunits. Subunits NuoB, C, D, E, F, and G constitute the peripheral sector of the complex.</text>
</comment>
<comment type="subcellular location">
    <subcellularLocation>
        <location evidence="1">Cell inner membrane</location>
        <topology evidence="1">Peripheral membrane protein</topology>
        <orientation evidence="1">Cytoplasmic side</orientation>
    </subcellularLocation>
</comment>
<comment type="similarity">
    <text evidence="1">Belongs to the complex I 49 kDa subunit family.</text>
</comment>
<feature type="chain" id="PRO_0000357846" description="NADH-quinone oxidoreductase subunit D">
    <location>
        <begin position="1"/>
        <end position="417"/>
    </location>
</feature>
<reference key="1">
    <citation type="journal article" date="2007" name="J. Bacteriol.">
        <title>Whole-genome analysis of the methyl tert-butyl ether-degrading beta-proteobacterium Methylibium petroleiphilum PM1.</title>
        <authorList>
            <person name="Kane S.R."/>
            <person name="Chakicherla A.Y."/>
            <person name="Chain P.S.G."/>
            <person name="Schmidt R."/>
            <person name="Shin M.W."/>
            <person name="Legler T.C."/>
            <person name="Scow K.M."/>
            <person name="Larimer F.W."/>
            <person name="Lucas S.M."/>
            <person name="Richardson P.M."/>
            <person name="Hristova K.R."/>
        </authorList>
    </citation>
    <scope>NUCLEOTIDE SEQUENCE [LARGE SCALE GENOMIC DNA]</scope>
    <source>
        <strain>ATCC BAA-1232 / LMG 22953 / PM1</strain>
    </source>
</reference>
<evidence type="ECO:0000255" key="1">
    <source>
        <dbReference type="HAMAP-Rule" id="MF_01358"/>
    </source>
</evidence>
<name>NUOD_METPP</name>
<dbReference type="EC" id="7.1.1.-" evidence="1"/>
<dbReference type="EMBL" id="CP000555">
    <property type="protein sequence ID" value="ABM94368.1"/>
    <property type="molecule type" value="Genomic_DNA"/>
</dbReference>
<dbReference type="RefSeq" id="WP_011829005.1">
    <property type="nucleotide sequence ID" value="NC_008825.1"/>
</dbReference>
<dbReference type="SMR" id="A2SFM9"/>
<dbReference type="STRING" id="420662.Mpe_A1406"/>
<dbReference type="KEGG" id="mpt:Mpe_A1406"/>
<dbReference type="eggNOG" id="COG0649">
    <property type="taxonomic scope" value="Bacteria"/>
</dbReference>
<dbReference type="HOGENOM" id="CLU_015134_1_1_4"/>
<dbReference type="Proteomes" id="UP000000366">
    <property type="component" value="Chromosome"/>
</dbReference>
<dbReference type="GO" id="GO:0005886">
    <property type="term" value="C:plasma membrane"/>
    <property type="evidence" value="ECO:0007669"/>
    <property type="project" value="UniProtKB-SubCell"/>
</dbReference>
<dbReference type="GO" id="GO:0051287">
    <property type="term" value="F:NAD binding"/>
    <property type="evidence" value="ECO:0007669"/>
    <property type="project" value="InterPro"/>
</dbReference>
<dbReference type="GO" id="GO:0050136">
    <property type="term" value="F:NADH:ubiquinone reductase (non-electrogenic) activity"/>
    <property type="evidence" value="ECO:0007669"/>
    <property type="project" value="UniProtKB-UniRule"/>
</dbReference>
<dbReference type="GO" id="GO:0048038">
    <property type="term" value="F:quinone binding"/>
    <property type="evidence" value="ECO:0007669"/>
    <property type="project" value="UniProtKB-KW"/>
</dbReference>
<dbReference type="FunFam" id="1.10.645.10:FF:000005">
    <property type="entry name" value="NADH-quinone oxidoreductase subunit D"/>
    <property type="match status" value="1"/>
</dbReference>
<dbReference type="Gene3D" id="1.10.645.10">
    <property type="entry name" value="Cytochrome-c3 Hydrogenase, chain B"/>
    <property type="match status" value="1"/>
</dbReference>
<dbReference type="HAMAP" id="MF_01358">
    <property type="entry name" value="NDH1_NuoD"/>
    <property type="match status" value="1"/>
</dbReference>
<dbReference type="InterPro" id="IPR001135">
    <property type="entry name" value="NADH_Q_OxRdtase_suD"/>
</dbReference>
<dbReference type="InterPro" id="IPR014029">
    <property type="entry name" value="NADH_UbQ_OxRdtase_49kDa_CS"/>
</dbReference>
<dbReference type="InterPro" id="IPR022885">
    <property type="entry name" value="NDH1_su_D/H"/>
</dbReference>
<dbReference type="InterPro" id="IPR029014">
    <property type="entry name" value="NiFe-Hase_large"/>
</dbReference>
<dbReference type="NCBIfam" id="TIGR01962">
    <property type="entry name" value="NuoD"/>
    <property type="match status" value="1"/>
</dbReference>
<dbReference type="NCBIfam" id="NF004739">
    <property type="entry name" value="PRK06075.1"/>
    <property type="match status" value="1"/>
</dbReference>
<dbReference type="PANTHER" id="PTHR11993:SF10">
    <property type="entry name" value="NADH DEHYDROGENASE [UBIQUINONE] IRON-SULFUR PROTEIN 2, MITOCHONDRIAL"/>
    <property type="match status" value="1"/>
</dbReference>
<dbReference type="PANTHER" id="PTHR11993">
    <property type="entry name" value="NADH-UBIQUINONE OXIDOREDUCTASE 49 KDA SUBUNIT"/>
    <property type="match status" value="1"/>
</dbReference>
<dbReference type="Pfam" id="PF00346">
    <property type="entry name" value="Complex1_49kDa"/>
    <property type="match status" value="1"/>
</dbReference>
<dbReference type="SUPFAM" id="SSF56762">
    <property type="entry name" value="HydB/Nqo4-like"/>
    <property type="match status" value="1"/>
</dbReference>
<dbReference type="PROSITE" id="PS00535">
    <property type="entry name" value="COMPLEX1_49K"/>
    <property type="match status" value="1"/>
</dbReference>
<protein>
    <recommendedName>
        <fullName evidence="1">NADH-quinone oxidoreductase subunit D</fullName>
        <ecNumber evidence="1">7.1.1.-</ecNumber>
    </recommendedName>
    <alternativeName>
        <fullName evidence="1">NADH dehydrogenase I subunit D</fullName>
    </alternativeName>
    <alternativeName>
        <fullName evidence="1">NDH-1 subunit D</fullName>
    </alternativeName>
</protein>